<sequence length="44" mass="5275">MKRTYQPKNRKHKRVHGFLSRMSTPNGRNVLKRRRAKGRKKLSA</sequence>
<reference key="1">
    <citation type="journal article" date="2008" name="J. Bacteriol.">
        <title>The genome of Heliobacterium modesticaldum, a phototrophic representative of the Firmicutes containing the simplest photosynthetic apparatus.</title>
        <authorList>
            <person name="Sattley W.M."/>
            <person name="Madigan M.T."/>
            <person name="Swingley W.D."/>
            <person name="Cheung P.C."/>
            <person name="Clocksin K.M."/>
            <person name="Conrad A.L."/>
            <person name="Dejesa L.C."/>
            <person name="Honchak B.M."/>
            <person name="Jung D.O."/>
            <person name="Karbach L.E."/>
            <person name="Kurdoglu A."/>
            <person name="Lahiri S."/>
            <person name="Mastrian S.D."/>
            <person name="Page L.E."/>
            <person name="Taylor H.L."/>
            <person name="Wang Z.T."/>
            <person name="Raymond J."/>
            <person name="Chen M."/>
            <person name="Blankenship R.E."/>
            <person name="Touchman J.W."/>
        </authorList>
    </citation>
    <scope>NUCLEOTIDE SEQUENCE [LARGE SCALE GENOMIC DNA]</scope>
    <source>
        <strain>ATCC 51547 / Ice1</strain>
    </source>
</reference>
<organism>
    <name type="scientific">Heliobacterium modesticaldum (strain ATCC 51547 / Ice1)</name>
    <dbReference type="NCBI Taxonomy" id="498761"/>
    <lineage>
        <taxon>Bacteria</taxon>
        <taxon>Bacillati</taxon>
        <taxon>Bacillota</taxon>
        <taxon>Clostridia</taxon>
        <taxon>Eubacteriales</taxon>
        <taxon>Heliobacteriaceae</taxon>
        <taxon>Heliomicrobium</taxon>
    </lineage>
</organism>
<feature type="chain" id="PRO_1000196057" description="Large ribosomal subunit protein bL34">
    <location>
        <begin position="1"/>
        <end position="44"/>
    </location>
</feature>
<feature type="region of interest" description="Disordered" evidence="2">
    <location>
        <begin position="1"/>
        <end position="44"/>
    </location>
</feature>
<feature type="compositionally biased region" description="Basic residues" evidence="2">
    <location>
        <begin position="1"/>
        <end position="16"/>
    </location>
</feature>
<feature type="compositionally biased region" description="Basic residues" evidence="2">
    <location>
        <begin position="30"/>
        <end position="44"/>
    </location>
</feature>
<gene>
    <name evidence="1" type="primary">rpmH</name>
    <name type="ordered locus">Helmi_10330</name>
    <name type="ORF">HM1_0907</name>
</gene>
<keyword id="KW-1185">Reference proteome</keyword>
<keyword id="KW-0687">Ribonucleoprotein</keyword>
<keyword id="KW-0689">Ribosomal protein</keyword>
<proteinExistence type="inferred from homology"/>
<dbReference type="EMBL" id="CP000930">
    <property type="protein sequence ID" value="ABZ83658.1"/>
    <property type="molecule type" value="Genomic_DNA"/>
</dbReference>
<dbReference type="SMR" id="B0TAK6"/>
<dbReference type="STRING" id="498761.HM1_0907"/>
<dbReference type="KEGG" id="hmo:HM1_0907"/>
<dbReference type="eggNOG" id="COG0230">
    <property type="taxonomic scope" value="Bacteria"/>
</dbReference>
<dbReference type="HOGENOM" id="CLU_129938_2_0_9"/>
<dbReference type="OrthoDB" id="9804164at2"/>
<dbReference type="Proteomes" id="UP000008550">
    <property type="component" value="Chromosome"/>
</dbReference>
<dbReference type="GO" id="GO:1990904">
    <property type="term" value="C:ribonucleoprotein complex"/>
    <property type="evidence" value="ECO:0007669"/>
    <property type="project" value="UniProtKB-KW"/>
</dbReference>
<dbReference type="GO" id="GO:0005840">
    <property type="term" value="C:ribosome"/>
    <property type="evidence" value="ECO:0007669"/>
    <property type="project" value="UniProtKB-KW"/>
</dbReference>
<dbReference type="GO" id="GO:0003735">
    <property type="term" value="F:structural constituent of ribosome"/>
    <property type="evidence" value="ECO:0007669"/>
    <property type="project" value="InterPro"/>
</dbReference>
<dbReference type="GO" id="GO:0006412">
    <property type="term" value="P:translation"/>
    <property type="evidence" value="ECO:0007669"/>
    <property type="project" value="UniProtKB-UniRule"/>
</dbReference>
<dbReference type="FunFam" id="1.10.287.3980:FF:000001">
    <property type="entry name" value="Mitochondrial ribosomal protein L34"/>
    <property type="match status" value="1"/>
</dbReference>
<dbReference type="Gene3D" id="1.10.287.3980">
    <property type="match status" value="1"/>
</dbReference>
<dbReference type="HAMAP" id="MF_00391">
    <property type="entry name" value="Ribosomal_bL34"/>
    <property type="match status" value="1"/>
</dbReference>
<dbReference type="InterPro" id="IPR000271">
    <property type="entry name" value="Ribosomal_bL34"/>
</dbReference>
<dbReference type="InterPro" id="IPR020939">
    <property type="entry name" value="Ribosomal_bL34_CS"/>
</dbReference>
<dbReference type="NCBIfam" id="TIGR01030">
    <property type="entry name" value="rpmH_bact"/>
    <property type="match status" value="1"/>
</dbReference>
<dbReference type="PANTHER" id="PTHR14503:SF4">
    <property type="entry name" value="LARGE RIBOSOMAL SUBUNIT PROTEIN BL34M"/>
    <property type="match status" value="1"/>
</dbReference>
<dbReference type="PANTHER" id="PTHR14503">
    <property type="entry name" value="MITOCHONDRIAL RIBOSOMAL PROTEIN 34 FAMILY MEMBER"/>
    <property type="match status" value="1"/>
</dbReference>
<dbReference type="Pfam" id="PF00468">
    <property type="entry name" value="Ribosomal_L34"/>
    <property type="match status" value="1"/>
</dbReference>
<dbReference type="PROSITE" id="PS00784">
    <property type="entry name" value="RIBOSOMAL_L34"/>
    <property type="match status" value="1"/>
</dbReference>
<evidence type="ECO:0000255" key="1">
    <source>
        <dbReference type="HAMAP-Rule" id="MF_00391"/>
    </source>
</evidence>
<evidence type="ECO:0000256" key="2">
    <source>
        <dbReference type="SAM" id="MobiDB-lite"/>
    </source>
</evidence>
<evidence type="ECO:0000305" key="3"/>
<accession>B0TAK6</accession>
<comment type="similarity">
    <text evidence="1">Belongs to the bacterial ribosomal protein bL34 family.</text>
</comment>
<name>RL34_HELMI</name>
<protein>
    <recommendedName>
        <fullName evidence="1">Large ribosomal subunit protein bL34</fullName>
    </recommendedName>
    <alternativeName>
        <fullName evidence="3">50S ribosomal protein L34</fullName>
    </alternativeName>
</protein>